<name>NADK_MOOTA</name>
<dbReference type="EC" id="2.7.1.23" evidence="1"/>
<dbReference type="EMBL" id="CP000232">
    <property type="protein sequence ID" value="ABC19818.1"/>
    <property type="molecule type" value="Genomic_DNA"/>
</dbReference>
<dbReference type="RefSeq" id="YP_430361.1">
    <property type="nucleotide sequence ID" value="NC_007644.1"/>
</dbReference>
<dbReference type="SMR" id="Q2RIC1"/>
<dbReference type="STRING" id="264732.Moth_1509"/>
<dbReference type="EnsemblBacteria" id="ABC19818">
    <property type="protein sequence ID" value="ABC19818"/>
    <property type="gene ID" value="Moth_1509"/>
</dbReference>
<dbReference type="KEGG" id="mta:Moth_1509"/>
<dbReference type="PATRIC" id="fig|264732.11.peg.1635"/>
<dbReference type="eggNOG" id="COG0061">
    <property type="taxonomic scope" value="Bacteria"/>
</dbReference>
<dbReference type="HOGENOM" id="CLU_008831_0_1_9"/>
<dbReference type="OrthoDB" id="9774737at2"/>
<dbReference type="GO" id="GO:0005737">
    <property type="term" value="C:cytoplasm"/>
    <property type="evidence" value="ECO:0007669"/>
    <property type="project" value="UniProtKB-SubCell"/>
</dbReference>
<dbReference type="GO" id="GO:0005524">
    <property type="term" value="F:ATP binding"/>
    <property type="evidence" value="ECO:0007669"/>
    <property type="project" value="UniProtKB-KW"/>
</dbReference>
<dbReference type="GO" id="GO:0046872">
    <property type="term" value="F:metal ion binding"/>
    <property type="evidence" value="ECO:0007669"/>
    <property type="project" value="UniProtKB-UniRule"/>
</dbReference>
<dbReference type="GO" id="GO:0051287">
    <property type="term" value="F:NAD binding"/>
    <property type="evidence" value="ECO:0007669"/>
    <property type="project" value="UniProtKB-ARBA"/>
</dbReference>
<dbReference type="GO" id="GO:0003951">
    <property type="term" value="F:NAD+ kinase activity"/>
    <property type="evidence" value="ECO:0007669"/>
    <property type="project" value="UniProtKB-UniRule"/>
</dbReference>
<dbReference type="GO" id="GO:0019674">
    <property type="term" value="P:NAD metabolic process"/>
    <property type="evidence" value="ECO:0007669"/>
    <property type="project" value="InterPro"/>
</dbReference>
<dbReference type="GO" id="GO:0006741">
    <property type="term" value="P:NADP biosynthetic process"/>
    <property type="evidence" value="ECO:0007669"/>
    <property type="project" value="UniProtKB-UniRule"/>
</dbReference>
<dbReference type="FunFam" id="2.60.200.30:FF:000009">
    <property type="entry name" value="Poly(P)/ATP NAD kinase"/>
    <property type="match status" value="1"/>
</dbReference>
<dbReference type="Gene3D" id="3.40.50.10330">
    <property type="entry name" value="Probable inorganic polyphosphate/atp-NAD kinase, domain 1"/>
    <property type="match status" value="1"/>
</dbReference>
<dbReference type="Gene3D" id="2.60.200.30">
    <property type="entry name" value="Probable inorganic polyphosphate/atp-NAD kinase, domain 2"/>
    <property type="match status" value="1"/>
</dbReference>
<dbReference type="HAMAP" id="MF_00361">
    <property type="entry name" value="NAD_kinase"/>
    <property type="match status" value="1"/>
</dbReference>
<dbReference type="InterPro" id="IPR017438">
    <property type="entry name" value="ATP-NAD_kinase_N"/>
</dbReference>
<dbReference type="InterPro" id="IPR017437">
    <property type="entry name" value="ATP-NAD_kinase_PpnK-typ_C"/>
</dbReference>
<dbReference type="InterPro" id="IPR016064">
    <property type="entry name" value="NAD/diacylglycerol_kinase_sf"/>
</dbReference>
<dbReference type="InterPro" id="IPR002504">
    <property type="entry name" value="NADK"/>
</dbReference>
<dbReference type="PANTHER" id="PTHR20275">
    <property type="entry name" value="NAD KINASE"/>
    <property type="match status" value="1"/>
</dbReference>
<dbReference type="PANTHER" id="PTHR20275:SF0">
    <property type="entry name" value="NAD KINASE"/>
    <property type="match status" value="1"/>
</dbReference>
<dbReference type="Pfam" id="PF01513">
    <property type="entry name" value="NAD_kinase"/>
    <property type="match status" value="1"/>
</dbReference>
<dbReference type="Pfam" id="PF20143">
    <property type="entry name" value="NAD_kinase_C"/>
    <property type="match status" value="1"/>
</dbReference>
<dbReference type="SUPFAM" id="SSF111331">
    <property type="entry name" value="NAD kinase/diacylglycerol kinase-like"/>
    <property type="match status" value="1"/>
</dbReference>
<comment type="function">
    <text evidence="1">Involved in the regulation of the intracellular balance of NAD and NADP, and is a key enzyme in the biosynthesis of NADP. Catalyzes specifically the phosphorylation on 2'-hydroxyl of the adenosine moiety of NAD to yield NADP.</text>
</comment>
<comment type="catalytic activity">
    <reaction evidence="1">
        <text>NAD(+) + ATP = ADP + NADP(+) + H(+)</text>
        <dbReference type="Rhea" id="RHEA:18629"/>
        <dbReference type="ChEBI" id="CHEBI:15378"/>
        <dbReference type="ChEBI" id="CHEBI:30616"/>
        <dbReference type="ChEBI" id="CHEBI:57540"/>
        <dbReference type="ChEBI" id="CHEBI:58349"/>
        <dbReference type="ChEBI" id="CHEBI:456216"/>
        <dbReference type="EC" id="2.7.1.23"/>
    </reaction>
</comment>
<comment type="cofactor">
    <cofactor evidence="1">
        <name>a divalent metal cation</name>
        <dbReference type="ChEBI" id="CHEBI:60240"/>
    </cofactor>
</comment>
<comment type="subcellular location">
    <subcellularLocation>
        <location evidence="1">Cytoplasm</location>
    </subcellularLocation>
</comment>
<comment type="similarity">
    <text evidence="1">Belongs to the NAD kinase family.</text>
</comment>
<proteinExistence type="inferred from homology"/>
<accession>Q2RIC1</accession>
<evidence type="ECO:0000255" key="1">
    <source>
        <dbReference type="HAMAP-Rule" id="MF_00361"/>
    </source>
</evidence>
<evidence type="ECO:0000256" key="2">
    <source>
        <dbReference type="SAM" id="MobiDB-lite"/>
    </source>
</evidence>
<keyword id="KW-0067">ATP-binding</keyword>
<keyword id="KW-0963">Cytoplasm</keyword>
<keyword id="KW-0418">Kinase</keyword>
<keyword id="KW-0520">NAD</keyword>
<keyword id="KW-0521">NADP</keyword>
<keyword id="KW-0547">Nucleotide-binding</keyword>
<keyword id="KW-0808">Transferase</keyword>
<gene>
    <name evidence="1" type="primary">nadK</name>
    <name type="ordered locus">Moth_1509</name>
</gene>
<reference key="1">
    <citation type="journal article" date="2008" name="Environ. Microbiol.">
        <title>The complete genome sequence of Moorella thermoacetica (f. Clostridium thermoaceticum).</title>
        <authorList>
            <person name="Pierce E."/>
            <person name="Xie G."/>
            <person name="Barabote R.D."/>
            <person name="Saunders E."/>
            <person name="Han C.S."/>
            <person name="Detter J.C."/>
            <person name="Richardson P."/>
            <person name="Brettin T.S."/>
            <person name="Das A."/>
            <person name="Ljungdahl L.G."/>
            <person name="Ragsdale S.W."/>
        </authorList>
    </citation>
    <scope>NUCLEOTIDE SEQUENCE [LARGE SCALE GENOMIC DNA]</scope>
    <source>
        <strain>ATCC 39073 / JCM 9320</strain>
    </source>
</reference>
<feature type="chain" id="PRO_0000229654" description="NAD kinase">
    <location>
        <begin position="1"/>
        <end position="311"/>
    </location>
</feature>
<feature type="region of interest" description="Disordered" evidence="2">
    <location>
        <begin position="278"/>
        <end position="311"/>
    </location>
</feature>
<feature type="compositionally biased region" description="Basic and acidic residues" evidence="2">
    <location>
        <begin position="278"/>
        <end position="287"/>
    </location>
</feature>
<feature type="active site" description="Proton acceptor" evidence="1">
    <location>
        <position position="67"/>
    </location>
</feature>
<feature type="binding site" evidence="1">
    <location>
        <begin position="67"/>
        <end position="68"/>
    </location>
    <ligand>
        <name>NAD(+)</name>
        <dbReference type="ChEBI" id="CHEBI:57540"/>
    </ligand>
</feature>
<feature type="binding site" evidence="1">
    <location>
        <position position="72"/>
    </location>
    <ligand>
        <name>NAD(+)</name>
        <dbReference type="ChEBI" id="CHEBI:57540"/>
    </ligand>
</feature>
<feature type="binding site" evidence="1">
    <location>
        <begin position="140"/>
        <end position="141"/>
    </location>
    <ligand>
        <name>NAD(+)</name>
        <dbReference type="ChEBI" id="CHEBI:57540"/>
    </ligand>
</feature>
<feature type="binding site" evidence="1">
    <location>
        <position position="151"/>
    </location>
    <ligand>
        <name>NAD(+)</name>
        <dbReference type="ChEBI" id="CHEBI:57540"/>
    </ligand>
</feature>
<feature type="binding site" evidence="1">
    <location>
        <position position="170"/>
    </location>
    <ligand>
        <name>NAD(+)</name>
        <dbReference type="ChEBI" id="CHEBI:57540"/>
    </ligand>
</feature>
<feature type="binding site" evidence="1">
    <location>
        <begin position="181"/>
        <end position="186"/>
    </location>
    <ligand>
        <name>NAD(+)</name>
        <dbReference type="ChEBI" id="CHEBI:57540"/>
    </ligand>
</feature>
<feature type="binding site" evidence="1">
    <location>
        <position position="240"/>
    </location>
    <ligand>
        <name>NAD(+)</name>
        <dbReference type="ChEBI" id="CHEBI:57540"/>
    </ligand>
</feature>
<protein>
    <recommendedName>
        <fullName evidence="1">NAD kinase</fullName>
        <ecNumber evidence="1">2.7.1.23</ecNumber>
    </recommendedName>
    <alternativeName>
        <fullName evidence="1">ATP-dependent NAD kinase</fullName>
    </alternativeName>
</protein>
<organism>
    <name type="scientific">Moorella thermoacetica (strain ATCC 39073 / JCM 9320)</name>
    <dbReference type="NCBI Taxonomy" id="264732"/>
    <lineage>
        <taxon>Bacteria</taxon>
        <taxon>Bacillati</taxon>
        <taxon>Bacillota</taxon>
        <taxon>Clostridia</taxon>
        <taxon>Moorellales</taxon>
        <taxon>Moorellaceae</taxon>
        <taxon>Moorella</taxon>
    </lineage>
</organism>
<sequence length="311" mass="33684">MQRIGMVANLEKPRVRETALDIINYLESRNVRVLISTRKAAALGCPEKGVAEEEVIAAEGLLALGGDGTLLRAARLVAPAGTPILGINLGHLGFLTEIELTELYPALDKLLAGAYRIEERMMLRGTVQRPEKALTCTALNDIVVTKGAFSRMLRLEVYIDTAYLDTYPADGLIVSSPTGSTAYSLSAGGPLVSPQLQVMILTPICPHTLYTRPLVVPGEQEIRVCVHAPGAEVMLTVDGQQGLHLRDGDVIRVTRARTPARLIRLQDNTFYSLVREKLKEGGSRQDDENPAATVNPETDSKYPHSHPGSTG</sequence>